<keyword id="KW-0067">ATP-binding</keyword>
<keyword id="KW-0119">Carbohydrate metabolism</keyword>
<keyword id="KW-0418">Kinase</keyword>
<keyword id="KW-0547">Nucleotide-binding</keyword>
<keyword id="KW-0808">Transferase</keyword>
<organism>
    <name type="scientific">Coxiella burnetii (strain CbuK_Q154)</name>
    <name type="common">Coxiella burnetii (strain Q154)</name>
    <dbReference type="NCBI Taxonomy" id="434924"/>
    <lineage>
        <taxon>Bacteria</taxon>
        <taxon>Pseudomonadati</taxon>
        <taxon>Pseudomonadota</taxon>
        <taxon>Gammaproteobacteria</taxon>
        <taxon>Legionellales</taxon>
        <taxon>Coxiellaceae</taxon>
        <taxon>Coxiella</taxon>
    </lineage>
</organism>
<name>ANMK_COXB1</name>
<feature type="chain" id="PRO_1000140151" description="Anhydro-N-acetylmuramic acid kinase">
    <location>
        <begin position="1"/>
        <end position="372"/>
    </location>
</feature>
<feature type="binding site" evidence="1">
    <location>
        <begin position="12"/>
        <end position="19"/>
    </location>
    <ligand>
        <name>ATP</name>
        <dbReference type="ChEBI" id="CHEBI:30616"/>
    </ligand>
</feature>
<reference key="1">
    <citation type="journal article" date="2009" name="Infect. Immun.">
        <title>Comparative genomics reveal extensive transposon-mediated genomic plasticity and diversity among potential effector proteins within the genus Coxiella.</title>
        <authorList>
            <person name="Beare P.A."/>
            <person name="Unsworth N."/>
            <person name="Andoh M."/>
            <person name="Voth D.E."/>
            <person name="Omsland A."/>
            <person name="Gilk S.D."/>
            <person name="Williams K.P."/>
            <person name="Sobral B.W."/>
            <person name="Kupko J.J. III"/>
            <person name="Porcella S.F."/>
            <person name="Samuel J.E."/>
            <person name="Heinzen R.A."/>
        </authorList>
    </citation>
    <scope>NUCLEOTIDE SEQUENCE [LARGE SCALE GENOMIC DNA]</scope>
    <source>
        <strain>CbuK_Q154</strain>
    </source>
</reference>
<evidence type="ECO:0000255" key="1">
    <source>
        <dbReference type="HAMAP-Rule" id="MF_01270"/>
    </source>
</evidence>
<gene>
    <name evidence="1" type="primary">anmK</name>
    <name type="ordered locus">CbuK_0366</name>
</gene>
<comment type="function">
    <text evidence="1">Catalyzes the specific phosphorylation of 1,6-anhydro-N-acetylmuramic acid (anhMurNAc) with the simultaneous cleavage of the 1,6-anhydro ring, generating MurNAc-6-P. Is required for the utilization of anhMurNAc either imported from the medium or derived from its own cell wall murein, and thus plays a role in cell wall recycling.</text>
</comment>
<comment type="catalytic activity">
    <reaction evidence="1">
        <text>1,6-anhydro-N-acetyl-beta-muramate + ATP + H2O = N-acetyl-D-muramate 6-phosphate + ADP + H(+)</text>
        <dbReference type="Rhea" id="RHEA:24952"/>
        <dbReference type="ChEBI" id="CHEBI:15377"/>
        <dbReference type="ChEBI" id="CHEBI:15378"/>
        <dbReference type="ChEBI" id="CHEBI:30616"/>
        <dbReference type="ChEBI" id="CHEBI:58690"/>
        <dbReference type="ChEBI" id="CHEBI:58722"/>
        <dbReference type="ChEBI" id="CHEBI:456216"/>
        <dbReference type="EC" id="2.7.1.170"/>
    </reaction>
</comment>
<comment type="pathway">
    <text evidence="1">Amino-sugar metabolism; 1,6-anhydro-N-acetylmuramate degradation.</text>
</comment>
<comment type="pathway">
    <text evidence="1">Cell wall biogenesis; peptidoglycan recycling.</text>
</comment>
<comment type="similarity">
    <text evidence="1">Belongs to the anhydro-N-acetylmuramic acid kinase family.</text>
</comment>
<proteinExistence type="inferred from homology"/>
<dbReference type="EC" id="2.7.1.170" evidence="1"/>
<dbReference type="EMBL" id="CP001020">
    <property type="protein sequence ID" value="ACJ19664.1"/>
    <property type="molecule type" value="Genomic_DNA"/>
</dbReference>
<dbReference type="RefSeq" id="WP_005770633.1">
    <property type="nucleotide sequence ID" value="NC_011528.1"/>
</dbReference>
<dbReference type="SMR" id="B6J4Z9"/>
<dbReference type="KEGG" id="cbc:CbuK_0366"/>
<dbReference type="HOGENOM" id="CLU_038782_0_0_6"/>
<dbReference type="UniPathway" id="UPA00343"/>
<dbReference type="UniPathway" id="UPA00544"/>
<dbReference type="GO" id="GO:0005524">
    <property type="term" value="F:ATP binding"/>
    <property type="evidence" value="ECO:0007669"/>
    <property type="project" value="UniProtKB-UniRule"/>
</dbReference>
<dbReference type="GO" id="GO:0016301">
    <property type="term" value="F:kinase activity"/>
    <property type="evidence" value="ECO:0007669"/>
    <property type="project" value="UniProtKB-KW"/>
</dbReference>
<dbReference type="GO" id="GO:0016773">
    <property type="term" value="F:phosphotransferase activity, alcohol group as acceptor"/>
    <property type="evidence" value="ECO:0007669"/>
    <property type="project" value="UniProtKB-UniRule"/>
</dbReference>
<dbReference type="GO" id="GO:0097175">
    <property type="term" value="P:1,6-anhydro-N-acetyl-beta-muramic acid catabolic process"/>
    <property type="evidence" value="ECO:0007669"/>
    <property type="project" value="UniProtKB-UniRule"/>
</dbReference>
<dbReference type="GO" id="GO:0006040">
    <property type="term" value="P:amino sugar metabolic process"/>
    <property type="evidence" value="ECO:0007669"/>
    <property type="project" value="InterPro"/>
</dbReference>
<dbReference type="GO" id="GO:0009254">
    <property type="term" value="P:peptidoglycan turnover"/>
    <property type="evidence" value="ECO:0007669"/>
    <property type="project" value="UniProtKB-UniRule"/>
</dbReference>
<dbReference type="CDD" id="cd24050">
    <property type="entry name" value="ASKHA_NBD_ANMK"/>
    <property type="match status" value="1"/>
</dbReference>
<dbReference type="Gene3D" id="3.30.420.40">
    <property type="match status" value="2"/>
</dbReference>
<dbReference type="HAMAP" id="MF_01270">
    <property type="entry name" value="AnhMurNAc_kinase"/>
    <property type="match status" value="1"/>
</dbReference>
<dbReference type="InterPro" id="IPR005338">
    <property type="entry name" value="Anhydro_N_Ac-Mur_kinase"/>
</dbReference>
<dbReference type="InterPro" id="IPR043129">
    <property type="entry name" value="ATPase_NBD"/>
</dbReference>
<dbReference type="NCBIfam" id="NF007139">
    <property type="entry name" value="PRK09585.1-3"/>
    <property type="match status" value="1"/>
</dbReference>
<dbReference type="NCBIfam" id="NF007148">
    <property type="entry name" value="PRK09585.3-2"/>
    <property type="match status" value="1"/>
</dbReference>
<dbReference type="PANTHER" id="PTHR30605">
    <property type="entry name" value="ANHYDRO-N-ACETYLMURAMIC ACID KINASE"/>
    <property type="match status" value="1"/>
</dbReference>
<dbReference type="PANTHER" id="PTHR30605:SF0">
    <property type="entry name" value="ANHYDRO-N-ACETYLMURAMIC ACID KINASE"/>
    <property type="match status" value="1"/>
</dbReference>
<dbReference type="Pfam" id="PF03702">
    <property type="entry name" value="AnmK"/>
    <property type="match status" value="1"/>
</dbReference>
<dbReference type="SUPFAM" id="SSF53067">
    <property type="entry name" value="Actin-like ATPase domain"/>
    <property type="match status" value="1"/>
</dbReference>
<protein>
    <recommendedName>
        <fullName evidence="1">Anhydro-N-acetylmuramic acid kinase</fullName>
        <ecNumber evidence="1">2.7.1.170</ecNumber>
    </recommendedName>
    <alternativeName>
        <fullName evidence="1">AnhMurNAc kinase</fullName>
    </alternativeName>
</protein>
<sequence length="372" mass="40679">MPKERYIGLISGTSMDALDTALVQFDPLKIIATHGEPIPTELKKNLVALSTGTDNSIPSMGETDVALGRLFGEAVLTLLEKAKVSSDSIQAIGSHGQTIRHMPNGKHPFTLQIGDPNTIAALTGITTVADFRRRDMALGGQGAPLAPAFHEFLLRDQSENRLILNIGGIANLTFLPRDPEKSTIGFDTGPGNTLLDAWCLMNLNKDYDDQGQWAASGRVQEKLVAQLLAEPYFQTPPPKSTGREYFNLNWLKKNLNGEKFDPVDIQATLVELTARSVANCCRNFSMDSGSLWLCGGGARNHHLVNRLKVLCKPLRVTTTEEIGIHPDWLEAVCFAWLAKQTLEKKPGNLPSVTGAKKSAILGAIYWGEKFNY</sequence>
<accession>B6J4Z9</accession>